<sequence>MNPFASLTLTTLIILTIPIMMSNSNIYKTNLYPNYVKTTVSYAFTLSLVPLLMFMHTGQEMIISNWHWMTLQTVELSLSFKMDYFSVMFIPVALFVTWSIMEFSMWYMHSDPFINRFFKYLVLFLITMMILVTANNLFQLFIGWEGVGIMSFLLIGWWHGRTDANTAALQAILYNRIGDIGFVLSMAWFLTHSNAWDLQQIFMLNNECPNMPLIGLLLAAAGKSAQFGLHPWLPSAMEGPTPVSALLHSSTMVVAGVFLLIRFYPLMETNKLVQTMTLCLGAITTLFTALCAITQNDIKKIVAFSTSSQLGLMMVTIGINQPHLAFLHICMHAFFKAMLFMCSGSIIHSLNDEQDIRKMGGLYKAMPFTTTALIIGSLALTGMPYLTGFYSKDLIIEAVNMSYTNAWALLMTLIATSLTAAYSTRIIFFAFLGKPRFPPLVLINENNPLLINSIKRLLIGSIFAGFIISNNIPPMTVPNTTMPLYMKMTALIVTIMGFMLALELNNTTYYLKFKYPSQTYKFSNMLGYYPSIMHRLPTYHNLSMSQKSASSLLDLIWLETILPKTTSFIQMKMSIMVSNQKGLIKLYFLSFLITIMISMTLFNYHE</sequence>
<dbReference type="EC" id="7.1.1.2" evidence="1"/>
<dbReference type="EMBL" id="AF034253">
    <property type="protein sequence ID" value="AAD34195.1"/>
    <property type="molecule type" value="Genomic_DNA"/>
</dbReference>
<dbReference type="EMBL" id="AF304200">
    <property type="protein sequence ID" value="AAG28187.1"/>
    <property type="molecule type" value="Genomic_DNA"/>
</dbReference>
<dbReference type="PIR" id="T10982">
    <property type="entry name" value="T10982"/>
</dbReference>
<dbReference type="RefSeq" id="NP_008644.1">
    <property type="nucleotide sequence ID" value="NC_000845.1"/>
</dbReference>
<dbReference type="PDB" id="5GPN">
    <property type="method" value="EM"/>
    <property type="resolution" value="5.40 A"/>
    <property type="chains" value="j=1-606"/>
</dbReference>
<dbReference type="PDB" id="5GUP">
    <property type="method" value="EM"/>
    <property type="resolution" value="4.00 A"/>
    <property type="chains" value="l=1-606"/>
</dbReference>
<dbReference type="PDB" id="7V2C">
    <property type="method" value="EM"/>
    <property type="resolution" value="2.90 A"/>
    <property type="chains" value="l=1-606"/>
</dbReference>
<dbReference type="PDB" id="7V2D">
    <property type="method" value="EM"/>
    <property type="resolution" value="3.30 A"/>
    <property type="chains" value="l=1-603"/>
</dbReference>
<dbReference type="PDB" id="7V2E">
    <property type="method" value="EM"/>
    <property type="resolution" value="2.80 A"/>
    <property type="chains" value="l=1-606"/>
</dbReference>
<dbReference type="PDB" id="7V2F">
    <property type="method" value="EM"/>
    <property type="resolution" value="3.10 A"/>
    <property type="chains" value="l=1-603"/>
</dbReference>
<dbReference type="PDB" id="7V2H">
    <property type="method" value="EM"/>
    <property type="resolution" value="2.50 A"/>
    <property type="chains" value="l=1-606"/>
</dbReference>
<dbReference type="PDB" id="7V2K">
    <property type="method" value="EM"/>
    <property type="resolution" value="2.70 A"/>
    <property type="chains" value="l=1-603"/>
</dbReference>
<dbReference type="PDB" id="7V2R">
    <property type="method" value="EM"/>
    <property type="resolution" value="2.60 A"/>
    <property type="chains" value="l=1-606"/>
</dbReference>
<dbReference type="PDB" id="7V30">
    <property type="method" value="EM"/>
    <property type="resolution" value="2.70 A"/>
    <property type="chains" value="l=1-603"/>
</dbReference>
<dbReference type="PDB" id="7V31">
    <property type="method" value="EM"/>
    <property type="resolution" value="2.90 A"/>
    <property type="chains" value="l=1-606"/>
</dbReference>
<dbReference type="PDB" id="7V32">
    <property type="method" value="EM"/>
    <property type="resolution" value="3.20 A"/>
    <property type="chains" value="l=1-603"/>
</dbReference>
<dbReference type="PDB" id="7V33">
    <property type="method" value="EM"/>
    <property type="resolution" value="2.60 A"/>
    <property type="chains" value="l=1-606"/>
</dbReference>
<dbReference type="PDB" id="7V3M">
    <property type="method" value="EM"/>
    <property type="resolution" value="2.90 A"/>
    <property type="chains" value="l=1-603"/>
</dbReference>
<dbReference type="PDB" id="7VBL">
    <property type="method" value="EM"/>
    <property type="resolution" value="2.60 A"/>
    <property type="chains" value="l=1-606"/>
</dbReference>
<dbReference type="PDB" id="7VBP">
    <property type="method" value="EM"/>
    <property type="resolution" value="2.80 A"/>
    <property type="chains" value="l=1-603"/>
</dbReference>
<dbReference type="PDB" id="7VC0">
    <property type="method" value="EM"/>
    <property type="resolution" value="2.60 A"/>
    <property type="chains" value="l=1-606"/>
</dbReference>
<dbReference type="PDB" id="7VWL">
    <property type="method" value="EM"/>
    <property type="resolution" value="2.70 A"/>
    <property type="chains" value="l=1-603"/>
</dbReference>
<dbReference type="PDB" id="7VXS">
    <property type="method" value="EM"/>
    <property type="resolution" value="2.90 A"/>
    <property type="chains" value="l=1-606"/>
</dbReference>
<dbReference type="PDB" id="7VY1">
    <property type="method" value="EM"/>
    <property type="resolution" value="3.30 A"/>
    <property type="chains" value="l=1-603"/>
</dbReference>
<dbReference type="PDB" id="7VY9">
    <property type="method" value="EM"/>
    <property type="resolution" value="2.90 A"/>
    <property type="chains" value="l=1-606"/>
</dbReference>
<dbReference type="PDB" id="7VYE">
    <property type="method" value="EM"/>
    <property type="resolution" value="3.10 A"/>
    <property type="chains" value="l=1-603"/>
</dbReference>
<dbReference type="PDB" id="7VYG">
    <property type="method" value="EM"/>
    <property type="resolution" value="2.90 A"/>
    <property type="chains" value="l=1-606"/>
</dbReference>
<dbReference type="PDB" id="7VYI">
    <property type="method" value="EM"/>
    <property type="resolution" value="3.10 A"/>
    <property type="chains" value="l=1-603"/>
</dbReference>
<dbReference type="PDB" id="7VYS">
    <property type="method" value="EM"/>
    <property type="resolution" value="2.50 A"/>
    <property type="chains" value="l=1-606"/>
</dbReference>
<dbReference type="PDB" id="7VZ8">
    <property type="method" value="EM"/>
    <property type="resolution" value="2.70 A"/>
    <property type="chains" value="l=1-603"/>
</dbReference>
<dbReference type="PDB" id="7VZV">
    <property type="method" value="EM"/>
    <property type="resolution" value="3.20 A"/>
    <property type="chains" value="l=1-606"/>
</dbReference>
<dbReference type="PDB" id="7VZW">
    <property type="method" value="EM"/>
    <property type="resolution" value="3.20 A"/>
    <property type="chains" value="l=1-606"/>
</dbReference>
<dbReference type="PDB" id="7W00">
    <property type="method" value="EM"/>
    <property type="resolution" value="3.50 A"/>
    <property type="chains" value="l=1-603"/>
</dbReference>
<dbReference type="PDB" id="7W0H">
    <property type="method" value="EM"/>
    <property type="resolution" value="3.40 A"/>
    <property type="chains" value="l=1-603"/>
</dbReference>
<dbReference type="PDB" id="7W0R">
    <property type="method" value="EM"/>
    <property type="resolution" value="2.80 A"/>
    <property type="chains" value="l=1-606"/>
</dbReference>
<dbReference type="PDB" id="7W1O">
    <property type="method" value="EM"/>
    <property type="resolution" value="3.50 A"/>
    <property type="chains" value="l=1-603"/>
</dbReference>
<dbReference type="PDB" id="7W1P">
    <property type="method" value="EM"/>
    <property type="resolution" value="3.10 A"/>
    <property type="chains" value="l=1-603"/>
</dbReference>
<dbReference type="PDB" id="7W1T">
    <property type="method" value="EM"/>
    <property type="resolution" value="3.00 A"/>
    <property type="chains" value="l=1-606"/>
</dbReference>
<dbReference type="PDB" id="7W1U">
    <property type="method" value="EM"/>
    <property type="resolution" value="3.20 A"/>
    <property type="chains" value="l=1-606"/>
</dbReference>
<dbReference type="PDB" id="7W1V">
    <property type="method" value="EM"/>
    <property type="resolution" value="3.00 A"/>
    <property type="chains" value="l=1-606"/>
</dbReference>
<dbReference type="PDB" id="7W1Z">
    <property type="method" value="EM"/>
    <property type="resolution" value="2.60 A"/>
    <property type="chains" value="l=1-606"/>
</dbReference>
<dbReference type="PDB" id="7W20">
    <property type="method" value="EM"/>
    <property type="resolution" value="3.00 A"/>
    <property type="chains" value="l=1-606"/>
</dbReference>
<dbReference type="PDB" id="7W2K">
    <property type="method" value="EM"/>
    <property type="resolution" value="2.90 A"/>
    <property type="chains" value="l=1-603"/>
</dbReference>
<dbReference type="PDB" id="7W2L">
    <property type="method" value="EM"/>
    <property type="resolution" value="3.00 A"/>
    <property type="chains" value="l=1-603"/>
</dbReference>
<dbReference type="PDB" id="7W2R">
    <property type="method" value="EM"/>
    <property type="resolution" value="2.90 A"/>
    <property type="chains" value="l=1-606"/>
</dbReference>
<dbReference type="PDB" id="7W2U">
    <property type="method" value="EM"/>
    <property type="resolution" value="2.60 A"/>
    <property type="chains" value="l=1-606"/>
</dbReference>
<dbReference type="PDB" id="7W2Y">
    <property type="method" value="EM"/>
    <property type="resolution" value="2.70 A"/>
    <property type="chains" value="l=1-606"/>
</dbReference>
<dbReference type="PDB" id="7W31">
    <property type="method" value="EM"/>
    <property type="resolution" value="3.10 A"/>
    <property type="chains" value="l=1-603"/>
</dbReference>
<dbReference type="PDB" id="7W32">
    <property type="method" value="EM"/>
    <property type="resolution" value="2.90 A"/>
    <property type="chains" value="l=1-606"/>
</dbReference>
<dbReference type="PDB" id="7W35">
    <property type="method" value="EM"/>
    <property type="resolution" value="3.00 A"/>
    <property type="chains" value="l=1-606"/>
</dbReference>
<dbReference type="PDB" id="7W4C">
    <property type="method" value="EM"/>
    <property type="resolution" value="2.70 A"/>
    <property type="chains" value="l=1-606"/>
</dbReference>
<dbReference type="PDB" id="7W4D">
    <property type="method" value="EM"/>
    <property type="resolution" value="3.00 A"/>
    <property type="chains" value="l=1-606"/>
</dbReference>
<dbReference type="PDB" id="7W4E">
    <property type="method" value="EM"/>
    <property type="resolution" value="3.00 A"/>
    <property type="chains" value="l=1-606"/>
</dbReference>
<dbReference type="PDB" id="7W4F">
    <property type="method" value="EM"/>
    <property type="resolution" value="2.70 A"/>
    <property type="chains" value="l=1-606"/>
</dbReference>
<dbReference type="PDB" id="7W4G">
    <property type="method" value="EM"/>
    <property type="resolution" value="3.10 A"/>
    <property type="chains" value="l=1-606"/>
</dbReference>
<dbReference type="PDB" id="7W4J">
    <property type="method" value="EM"/>
    <property type="resolution" value="3.20 A"/>
    <property type="chains" value="l=1-603"/>
</dbReference>
<dbReference type="PDB" id="7W4K">
    <property type="method" value="EM"/>
    <property type="resolution" value="3.20 A"/>
    <property type="chains" value="l=1-603"/>
</dbReference>
<dbReference type="PDB" id="7W4L">
    <property type="method" value="EM"/>
    <property type="resolution" value="3.10 A"/>
    <property type="chains" value="l=1-603"/>
</dbReference>
<dbReference type="PDB" id="7W4M">
    <property type="method" value="EM"/>
    <property type="resolution" value="3.30 A"/>
    <property type="chains" value="l=1-603"/>
</dbReference>
<dbReference type="PDB" id="7W4N">
    <property type="method" value="EM"/>
    <property type="resolution" value="3.00 A"/>
    <property type="chains" value="l=1-603"/>
</dbReference>
<dbReference type="PDB" id="8UD1">
    <property type="method" value="EM"/>
    <property type="resolution" value="2.10 A"/>
    <property type="chains" value="1L=1-606"/>
</dbReference>
<dbReference type="PDB" id="8UEO">
    <property type="method" value="EM"/>
    <property type="resolution" value="3.80 A"/>
    <property type="chains" value="1L=1-606"/>
</dbReference>
<dbReference type="PDB" id="8UEP">
    <property type="method" value="EM"/>
    <property type="resolution" value="3.40 A"/>
    <property type="chains" value="1L=1-606"/>
</dbReference>
<dbReference type="PDB" id="8UEQ">
    <property type="method" value="EM"/>
    <property type="resolution" value="3.40 A"/>
    <property type="chains" value="1L=1-606"/>
</dbReference>
<dbReference type="PDB" id="8UER">
    <property type="method" value="EM"/>
    <property type="resolution" value="3.50 A"/>
    <property type="chains" value="1L=1-606"/>
</dbReference>
<dbReference type="PDB" id="8UES">
    <property type="method" value="EM"/>
    <property type="resolution" value="3.60 A"/>
    <property type="chains" value="1L=1-606"/>
</dbReference>
<dbReference type="PDB" id="8UET">
    <property type="method" value="EM"/>
    <property type="resolution" value="3.70 A"/>
    <property type="chains" value="1L=1-606"/>
</dbReference>
<dbReference type="PDB" id="8UEU">
    <property type="method" value="EM"/>
    <property type="resolution" value="3.60 A"/>
    <property type="chains" value="1L=1-606"/>
</dbReference>
<dbReference type="PDB" id="8UEV">
    <property type="method" value="EM"/>
    <property type="resolution" value="3.70 A"/>
    <property type="chains" value="1L=1-606"/>
</dbReference>
<dbReference type="PDB" id="8UEW">
    <property type="method" value="EM"/>
    <property type="resolution" value="3.60 A"/>
    <property type="chains" value="1L=1-606"/>
</dbReference>
<dbReference type="PDB" id="8UEX">
    <property type="method" value="EM"/>
    <property type="resolution" value="3.90 A"/>
    <property type="chains" value="1L=1-606"/>
</dbReference>
<dbReference type="PDB" id="8UEY">
    <property type="method" value="EM"/>
    <property type="resolution" value="3.60 A"/>
    <property type="chains" value="1L=1-606"/>
</dbReference>
<dbReference type="PDB" id="8UEZ">
    <property type="method" value="EM"/>
    <property type="resolution" value="3.50 A"/>
    <property type="chains" value="1L=1-606"/>
</dbReference>
<dbReference type="PDB" id="8UGH">
    <property type="method" value="EM"/>
    <property type="resolution" value="2.10 A"/>
    <property type="chains" value="1L=1-606"/>
</dbReference>
<dbReference type="PDB" id="8UGI">
    <property type="method" value="EM"/>
    <property type="resolution" value="2.10 A"/>
    <property type="chains" value="1L=1-606"/>
</dbReference>
<dbReference type="PDB" id="8UGJ">
    <property type="method" value="EM"/>
    <property type="resolution" value="2.30 A"/>
    <property type="chains" value="1L=1-606"/>
</dbReference>
<dbReference type="PDB" id="8UGN">
    <property type="method" value="EM"/>
    <property type="resolution" value="2.70 A"/>
    <property type="chains" value="1L/5L=1-606"/>
</dbReference>
<dbReference type="PDB" id="8UGR">
    <property type="method" value="EM"/>
    <property type="resolution" value="6.50 A"/>
    <property type="chains" value="1L/5L=1-606"/>
</dbReference>
<dbReference type="PDBsum" id="5GPN"/>
<dbReference type="PDBsum" id="5GUP"/>
<dbReference type="PDBsum" id="7V2C"/>
<dbReference type="PDBsum" id="7V2D"/>
<dbReference type="PDBsum" id="7V2E"/>
<dbReference type="PDBsum" id="7V2F"/>
<dbReference type="PDBsum" id="7V2H"/>
<dbReference type="PDBsum" id="7V2K"/>
<dbReference type="PDBsum" id="7V2R"/>
<dbReference type="PDBsum" id="7V30"/>
<dbReference type="PDBsum" id="7V31"/>
<dbReference type="PDBsum" id="7V32"/>
<dbReference type="PDBsum" id="7V33"/>
<dbReference type="PDBsum" id="7V3M"/>
<dbReference type="PDBsum" id="7VBL"/>
<dbReference type="PDBsum" id="7VBP"/>
<dbReference type="PDBsum" id="7VC0"/>
<dbReference type="PDBsum" id="7VWL"/>
<dbReference type="PDBsum" id="7VXS"/>
<dbReference type="PDBsum" id="7VY1"/>
<dbReference type="PDBsum" id="7VY9"/>
<dbReference type="PDBsum" id="7VYE"/>
<dbReference type="PDBsum" id="7VYG"/>
<dbReference type="PDBsum" id="7VYI"/>
<dbReference type="PDBsum" id="7VYS"/>
<dbReference type="PDBsum" id="7VZ8"/>
<dbReference type="PDBsum" id="7VZV"/>
<dbReference type="PDBsum" id="7VZW"/>
<dbReference type="PDBsum" id="7W00"/>
<dbReference type="PDBsum" id="7W0H"/>
<dbReference type="PDBsum" id="7W0R"/>
<dbReference type="PDBsum" id="7W1O"/>
<dbReference type="PDBsum" id="7W1P"/>
<dbReference type="PDBsum" id="7W1T"/>
<dbReference type="PDBsum" id="7W1U"/>
<dbReference type="PDBsum" id="7W1V"/>
<dbReference type="PDBsum" id="7W1Z"/>
<dbReference type="PDBsum" id="7W20"/>
<dbReference type="PDBsum" id="7W2K"/>
<dbReference type="PDBsum" id="7W2L"/>
<dbReference type="PDBsum" id="7W2R"/>
<dbReference type="PDBsum" id="7W2U"/>
<dbReference type="PDBsum" id="7W2Y"/>
<dbReference type="PDBsum" id="7W31"/>
<dbReference type="PDBsum" id="7W32"/>
<dbReference type="PDBsum" id="7W35"/>
<dbReference type="PDBsum" id="7W4C"/>
<dbReference type="PDBsum" id="7W4D"/>
<dbReference type="PDBsum" id="7W4E"/>
<dbReference type="PDBsum" id="7W4F"/>
<dbReference type="PDBsum" id="7W4G"/>
<dbReference type="PDBsum" id="7W4J"/>
<dbReference type="PDBsum" id="7W4K"/>
<dbReference type="PDBsum" id="7W4L"/>
<dbReference type="PDBsum" id="7W4M"/>
<dbReference type="PDBsum" id="7W4N"/>
<dbReference type="PDBsum" id="8UD1"/>
<dbReference type="PDBsum" id="8UEO"/>
<dbReference type="PDBsum" id="8UEP"/>
<dbReference type="PDBsum" id="8UEQ"/>
<dbReference type="PDBsum" id="8UER"/>
<dbReference type="PDBsum" id="8UES"/>
<dbReference type="PDBsum" id="8UET"/>
<dbReference type="PDBsum" id="8UEU"/>
<dbReference type="PDBsum" id="8UEV"/>
<dbReference type="PDBsum" id="8UEW"/>
<dbReference type="PDBsum" id="8UEX"/>
<dbReference type="PDBsum" id="8UEY"/>
<dbReference type="PDBsum" id="8UEZ"/>
<dbReference type="PDBsum" id="8UGH"/>
<dbReference type="PDBsum" id="8UGI"/>
<dbReference type="PDBsum" id="8UGJ"/>
<dbReference type="PDBsum" id="8UGN"/>
<dbReference type="PDBsum" id="8UGR"/>
<dbReference type="EMDB" id="EMD-31881"/>
<dbReference type="EMDB" id="EMD-31884"/>
<dbReference type="EMDB" id="EMD-31887"/>
<dbReference type="EMDB" id="EMD-32155"/>
<dbReference type="EMDB" id="EMD-32187"/>
<dbReference type="EMDB" id="EMD-32191"/>
<dbReference type="EMDB" id="EMD-32197"/>
<dbReference type="EMDB" id="EMD-32202"/>
<dbReference type="EMDB" id="EMD-32204"/>
<dbReference type="EMDB" id="EMD-32206"/>
<dbReference type="EMDB" id="EMD-32214"/>
<dbReference type="EMDB" id="EMD-32222"/>
<dbReference type="EMDB" id="EMD-32230"/>
<dbReference type="EMDB" id="EMD-32231"/>
<dbReference type="EMDB" id="EMD-32232"/>
<dbReference type="EMDB" id="EMD-32242"/>
<dbReference type="EMDB" id="EMD-32248"/>
<dbReference type="EMDB" id="EMD-32253"/>
<dbReference type="EMDB" id="EMD-32254"/>
<dbReference type="EMDB" id="EMD-32255"/>
<dbReference type="EMDB" id="EMD-32256"/>
<dbReference type="EMDB" id="EMD-32257"/>
<dbReference type="EMDB" id="EMD-32259"/>
<dbReference type="EMDB" id="EMD-32260"/>
<dbReference type="EMDB" id="EMD-32263"/>
<dbReference type="EMDB" id="EMD-32264"/>
<dbReference type="EMDB" id="EMD-32265"/>
<dbReference type="EMDB" id="EMD-32266"/>
<dbReference type="EMDB" id="EMD-32267"/>
<dbReference type="EMDB" id="EMD-32269"/>
<dbReference type="EMDB" id="EMD-32270"/>
<dbReference type="EMDB" id="EMD-32271"/>
<dbReference type="EMDB" id="EMD-32300"/>
<dbReference type="EMDB" id="EMD-32301"/>
<dbReference type="EMDB" id="EMD-32302"/>
<dbReference type="EMDB" id="EMD-32303"/>
<dbReference type="EMDB" id="EMD-32304"/>
<dbReference type="EMDB" id="EMD-32305"/>
<dbReference type="EMDB" id="EMD-32306"/>
<dbReference type="EMDB" id="EMD-32307"/>
<dbReference type="EMDB" id="EMD-32308"/>
<dbReference type="EMDB" id="EMD-32309"/>
<dbReference type="EMDB" id="EMD-42143"/>
<dbReference type="EMDB" id="EMD-42165"/>
<dbReference type="EMDB" id="EMD-42166"/>
<dbReference type="EMDB" id="EMD-42167"/>
<dbReference type="EMDB" id="EMD-42168"/>
<dbReference type="EMDB" id="EMD-42169"/>
<dbReference type="EMDB" id="EMD-42170"/>
<dbReference type="EMDB" id="EMD-42171"/>
<dbReference type="EMDB" id="EMD-42172"/>
<dbReference type="EMDB" id="EMD-42173"/>
<dbReference type="EMDB" id="EMD-42174"/>
<dbReference type="EMDB" id="EMD-42175"/>
<dbReference type="EMDB" id="EMD-42176"/>
<dbReference type="EMDB" id="EMD-42225"/>
<dbReference type="EMDB" id="EMD-42226"/>
<dbReference type="EMDB" id="EMD-42227"/>
<dbReference type="EMDB" id="EMD-42230"/>
<dbReference type="EMDB" id="EMD-42233"/>
<dbReference type="EMDB" id="EMD-9534"/>
<dbReference type="EMDB" id="EMD-9539"/>
<dbReference type="SMR" id="Q9TDR1"/>
<dbReference type="FunCoup" id="Q9TDR1">
    <property type="interactions" value="104"/>
</dbReference>
<dbReference type="STRING" id="9823.ENSSSCP00000019145"/>
<dbReference type="GlyGen" id="Q9TDR1">
    <property type="glycosylation" value="1 site"/>
</dbReference>
<dbReference type="PaxDb" id="9823-ENSSSCP00000019145"/>
<dbReference type="PeptideAtlas" id="Q9TDR1"/>
<dbReference type="Ensembl" id="ENSSSCT00000019686.3">
    <property type="protein sequence ID" value="ENSSSCP00000019145.3"/>
    <property type="gene ID" value="ENSSSCG00000018091.3"/>
</dbReference>
<dbReference type="Ensembl" id="ENSSSCT00070061688.1">
    <property type="protein sequence ID" value="ENSSSCP00070052588.1"/>
    <property type="gene ID" value="ENSSSCG00070030651.1"/>
</dbReference>
<dbReference type="Ensembl" id="ENSSSCT00085000033">
    <property type="protein sequence ID" value="ENSSSCP00085000012"/>
    <property type="gene ID" value="ENSSSCG00085000033"/>
</dbReference>
<dbReference type="Ensembl" id="ENSSSCT00090000033">
    <property type="protein sequence ID" value="ENSSSCP00090000012"/>
    <property type="gene ID" value="ENSSSCG00090000033"/>
</dbReference>
<dbReference type="Ensembl" id="ENSSSCT00105000033">
    <property type="protein sequence ID" value="ENSSSCP00105000012"/>
    <property type="gene ID" value="ENSSSCG00105000033"/>
</dbReference>
<dbReference type="Ensembl" id="ENSSSCT00110000033">
    <property type="protein sequence ID" value="ENSSSCP00110000012"/>
    <property type="gene ID" value="ENSSSCG00110000033"/>
</dbReference>
<dbReference type="Ensembl" id="ENSSSCT00115000033">
    <property type="protein sequence ID" value="ENSSSCP00115000012"/>
    <property type="gene ID" value="ENSSSCG00115000033"/>
</dbReference>
<dbReference type="Ensembl" id="ENSSSCT00130000033">
    <property type="protein sequence ID" value="ENSSSCP00130000012"/>
    <property type="gene ID" value="ENSSSCG00130000033"/>
</dbReference>
<dbReference type="GeneID" id="808511"/>
<dbReference type="KEGG" id="ssc:808511"/>
<dbReference type="CTD" id="4540"/>
<dbReference type="VGNC" id="VGNC:99796">
    <property type="gene designation" value="MT-ND5"/>
</dbReference>
<dbReference type="eggNOG" id="KOG4668">
    <property type="taxonomic scope" value="Eukaryota"/>
</dbReference>
<dbReference type="GeneTree" id="ENSGT00730000111303"/>
<dbReference type="HOGENOM" id="CLU_007100_6_0_1"/>
<dbReference type="InParanoid" id="Q9TDR1"/>
<dbReference type="OMA" id="GVGIMSF"/>
<dbReference type="OrthoDB" id="10069788at2759"/>
<dbReference type="TreeFam" id="TF342974"/>
<dbReference type="Reactome" id="R-SSC-611105">
    <property type="pathway name" value="Respiratory electron transport"/>
</dbReference>
<dbReference type="Reactome" id="R-SSC-6799198">
    <property type="pathway name" value="Complex I biogenesis"/>
</dbReference>
<dbReference type="Proteomes" id="UP000008227">
    <property type="component" value="Mitochondrion"/>
</dbReference>
<dbReference type="Proteomes" id="UP000314985">
    <property type="component" value="Mitochondrion"/>
</dbReference>
<dbReference type="Proteomes" id="UP000694570">
    <property type="component" value="Unplaced"/>
</dbReference>
<dbReference type="Proteomes" id="UP000694571">
    <property type="component" value="Unplaced"/>
</dbReference>
<dbReference type="Proteomes" id="UP000694720">
    <property type="component" value="Unplaced"/>
</dbReference>
<dbReference type="Proteomes" id="UP000694722">
    <property type="component" value="Unplaced"/>
</dbReference>
<dbReference type="Proteomes" id="UP000694723">
    <property type="component" value="Unplaced"/>
</dbReference>
<dbReference type="Proteomes" id="UP000694724">
    <property type="component" value="Unplaced"/>
</dbReference>
<dbReference type="Proteomes" id="UP000694725">
    <property type="component" value="Unplaced"/>
</dbReference>
<dbReference type="Proteomes" id="UP000694726">
    <property type="component" value="Unplaced"/>
</dbReference>
<dbReference type="Proteomes" id="UP000694727">
    <property type="component" value="Unplaced"/>
</dbReference>
<dbReference type="Proteomes" id="UP000694728">
    <property type="component" value="Unplaced"/>
</dbReference>
<dbReference type="Bgee" id="ENSSSCG00000018091">
    <property type="expression patterns" value="Expressed in Ammon's horn and 45 other cell types or tissues"/>
</dbReference>
<dbReference type="GO" id="GO:0005743">
    <property type="term" value="C:mitochondrial inner membrane"/>
    <property type="evidence" value="ECO:0000250"/>
    <property type="project" value="UniProtKB"/>
</dbReference>
<dbReference type="GO" id="GO:0045271">
    <property type="term" value="C:respiratory chain complex I"/>
    <property type="evidence" value="ECO:0000318"/>
    <property type="project" value="GO_Central"/>
</dbReference>
<dbReference type="GO" id="GO:0008137">
    <property type="term" value="F:NADH dehydrogenase (ubiquinone) activity"/>
    <property type="evidence" value="ECO:0000250"/>
    <property type="project" value="UniProtKB"/>
</dbReference>
<dbReference type="GO" id="GO:0015990">
    <property type="term" value="P:electron transport coupled proton transport"/>
    <property type="evidence" value="ECO:0000318"/>
    <property type="project" value="GO_Central"/>
</dbReference>
<dbReference type="GO" id="GO:0006120">
    <property type="term" value="P:mitochondrial electron transport, NADH to ubiquinone"/>
    <property type="evidence" value="ECO:0000250"/>
    <property type="project" value="UniProtKB"/>
</dbReference>
<dbReference type="GO" id="GO:0032981">
    <property type="term" value="P:mitochondrial respiratory chain complex I assembly"/>
    <property type="evidence" value="ECO:0000250"/>
    <property type="project" value="UniProtKB"/>
</dbReference>
<dbReference type="InterPro" id="IPR010934">
    <property type="entry name" value="NADH_DH_su5_C"/>
</dbReference>
<dbReference type="InterPro" id="IPR018393">
    <property type="entry name" value="NADHpl_OxRdtase_5_subgr"/>
</dbReference>
<dbReference type="InterPro" id="IPR001750">
    <property type="entry name" value="ND/Mrp_TM"/>
</dbReference>
<dbReference type="InterPro" id="IPR003945">
    <property type="entry name" value="NU5C-like"/>
</dbReference>
<dbReference type="InterPro" id="IPR001516">
    <property type="entry name" value="Proton_antipo_N"/>
</dbReference>
<dbReference type="NCBIfam" id="TIGR01974">
    <property type="entry name" value="NDH_I_L"/>
    <property type="match status" value="1"/>
</dbReference>
<dbReference type="PANTHER" id="PTHR42829">
    <property type="entry name" value="NADH-UBIQUINONE OXIDOREDUCTASE CHAIN 5"/>
    <property type="match status" value="1"/>
</dbReference>
<dbReference type="PANTHER" id="PTHR42829:SF2">
    <property type="entry name" value="NADH-UBIQUINONE OXIDOREDUCTASE CHAIN 5"/>
    <property type="match status" value="1"/>
</dbReference>
<dbReference type="Pfam" id="PF06455">
    <property type="entry name" value="NADH5_C"/>
    <property type="match status" value="1"/>
</dbReference>
<dbReference type="Pfam" id="PF00361">
    <property type="entry name" value="Proton_antipo_M"/>
    <property type="match status" value="1"/>
</dbReference>
<dbReference type="Pfam" id="PF00662">
    <property type="entry name" value="Proton_antipo_N"/>
    <property type="match status" value="1"/>
</dbReference>
<dbReference type="PRINTS" id="PR01434">
    <property type="entry name" value="NADHDHGNASE5"/>
</dbReference>
<keyword id="KW-0002">3D-structure</keyword>
<keyword id="KW-0249">Electron transport</keyword>
<keyword id="KW-0472">Membrane</keyword>
<keyword id="KW-0496">Mitochondrion</keyword>
<keyword id="KW-0999">Mitochondrion inner membrane</keyword>
<keyword id="KW-0520">NAD</keyword>
<keyword id="KW-1185">Reference proteome</keyword>
<keyword id="KW-0679">Respiratory chain</keyword>
<keyword id="KW-1278">Translocase</keyword>
<keyword id="KW-0812">Transmembrane</keyword>
<keyword id="KW-1133">Transmembrane helix</keyword>
<keyword id="KW-0813">Transport</keyword>
<keyword id="KW-0830">Ubiquinone</keyword>
<gene>
    <name type="primary">MT-ND5</name>
    <name type="synonym">MTND5</name>
    <name type="synonym">NADH5</name>
    <name type="synonym">ND5</name>
</gene>
<accession>Q9TDR1</accession>
<accession>Q9G7T6</accession>
<proteinExistence type="evidence at protein level"/>
<protein>
    <recommendedName>
        <fullName>NADH-ubiquinone oxidoreductase chain 5</fullName>
        <ecNumber evidence="1">7.1.1.2</ecNumber>
    </recommendedName>
    <alternativeName>
        <fullName>NADH dehydrogenase subunit 5</fullName>
    </alternativeName>
</protein>
<geneLocation type="mitochondrion"/>
<name>NU5M_PIG</name>
<organism>
    <name type="scientific">Sus scrofa</name>
    <name type="common">Pig</name>
    <dbReference type="NCBI Taxonomy" id="9823"/>
    <lineage>
        <taxon>Eukaryota</taxon>
        <taxon>Metazoa</taxon>
        <taxon>Chordata</taxon>
        <taxon>Craniata</taxon>
        <taxon>Vertebrata</taxon>
        <taxon>Euteleostomi</taxon>
        <taxon>Mammalia</taxon>
        <taxon>Eutheria</taxon>
        <taxon>Laurasiatheria</taxon>
        <taxon>Artiodactyla</taxon>
        <taxon>Suina</taxon>
        <taxon>Suidae</taxon>
        <taxon>Sus</taxon>
    </lineage>
</organism>
<comment type="function">
    <text evidence="1">Core subunit of the mitochondrial membrane respiratory chain NADH dehydrogenase (Complex I) which catalyzes electron transfer from NADH through the respiratory chain, using ubiquinone as an electron acceptor. Essential for the catalytic activity and assembly of complex I.</text>
</comment>
<comment type="catalytic activity">
    <reaction evidence="1">
        <text>a ubiquinone + NADH + 5 H(+)(in) = a ubiquinol + NAD(+) + 4 H(+)(out)</text>
        <dbReference type="Rhea" id="RHEA:29091"/>
        <dbReference type="Rhea" id="RHEA-COMP:9565"/>
        <dbReference type="Rhea" id="RHEA-COMP:9566"/>
        <dbReference type="ChEBI" id="CHEBI:15378"/>
        <dbReference type="ChEBI" id="CHEBI:16389"/>
        <dbReference type="ChEBI" id="CHEBI:17976"/>
        <dbReference type="ChEBI" id="CHEBI:57540"/>
        <dbReference type="ChEBI" id="CHEBI:57945"/>
        <dbReference type="EC" id="7.1.1.2"/>
    </reaction>
</comment>
<comment type="subunit">
    <text evidence="2">Core subunit of respiratory chain NADH dehydrogenase (Complex I) which is composed of 45 different subunits.</text>
</comment>
<comment type="subcellular location">
    <subcellularLocation>
        <location evidence="2">Mitochondrion inner membrane</location>
        <topology evidence="3">Multi-pass membrane protein</topology>
    </subcellularLocation>
</comment>
<comment type="similarity">
    <text evidence="4">Belongs to the complex I subunit 5 family.</text>
</comment>
<feature type="chain" id="PRO_0000118134" description="NADH-ubiquinone oxidoreductase chain 5">
    <location>
        <begin position="1"/>
        <end position="606"/>
    </location>
</feature>
<feature type="transmembrane region" description="Helical" evidence="3">
    <location>
        <begin position="1"/>
        <end position="21"/>
    </location>
</feature>
<feature type="transmembrane region" description="Helical" evidence="3">
    <location>
        <begin position="43"/>
        <end position="63"/>
    </location>
</feature>
<feature type="transmembrane region" description="Helical" evidence="3">
    <location>
        <begin position="87"/>
        <end position="107"/>
    </location>
</feature>
<feature type="transmembrane region" description="Helical" evidence="3">
    <location>
        <begin position="112"/>
        <end position="132"/>
    </location>
</feature>
<feature type="transmembrane region" description="Helical" evidence="3">
    <location>
        <begin position="137"/>
        <end position="157"/>
    </location>
</feature>
<feature type="transmembrane region" description="Helical" evidence="3">
    <location>
        <begin position="171"/>
        <end position="191"/>
    </location>
</feature>
<feature type="transmembrane region" description="Helical" evidence="3">
    <location>
        <begin position="213"/>
        <end position="233"/>
    </location>
</feature>
<feature type="transmembrane region" description="Helical" evidence="3">
    <location>
        <begin position="241"/>
        <end position="261"/>
    </location>
</feature>
<feature type="transmembrane region" description="Helical" evidence="3">
    <location>
        <begin position="273"/>
        <end position="293"/>
    </location>
</feature>
<feature type="transmembrane region" description="Helical" evidence="3">
    <location>
        <begin position="301"/>
        <end position="321"/>
    </location>
</feature>
<feature type="transmembrane region" description="Helical" evidence="3">
    <location>
        <begin position="324"/>
        <end position="344"/>
    </location>
</feature>
<feature type="transmembrane region" description="Helical" evidence="3">
    <location>
        <begin position="366"/>
        <end position="386"/>
    </location>
</feature>
<feature type="transmembrane region" description="Helical" evidence="3">
    <location>
        <begin position="407"/>
        <end position="429"/>
    </location>
</feature>
<feature type="transmembrane region" description="Helical" evidence="3">
    <location>
        <begin position="457"/>
        <end position="477"/>
    </location>
</feature>
<feature type="transmembrane region" description="Helical" evidence="3">
    <location>
        <begin position="482"/>
        <end position="502"/>
    </location>
</feature>
<feature type="transmembrane region" description="Helical" evidence="3">
    <location>
        <begin position="582"/>
        <end position="602"/>
    </location>
</feature>
<feature type="sequence conflict" description="In Ref. 2; AAG28187." evidence="4" ref="2">
    <original>I</original>
    <variation>T</variation>
    <location>
        <position position="13"/>
    </location>
</feature>
<feature type="sequence conflict" description="In Ref. 2; AAG28187." evidence="4" ref="2">
    <original>V</original>
    <variation>L</variation>
    <location>
        <position position="122"/>
    </location>
</feature>
<feature type="sequence conflict" description="In Ref. 2; AAG28187." evidence="4" ref="2">
    <original>L</original>
    <variation>F</variation>
    <location>
        <position position="198"/>
    </location>
</feature>
<feature type="sequence conflict" description="In Ref. 2; AAG28187." evidence="4" ref="2">
    <original>V</original>
    <variation>A</variation>
    <location>
        <position position="399"/>
    </location>
</feature>
<feature type="sequence conflict" description="In Ref. 2; AAG28187." evidence="4" ref="2">
    <original>K</original>
    <variation>Q</variation>
    <location>
        <position position="434"/>
    </location>
</feature>
<feature type="sequence conflict" description="In Ref. 2; AAG28187." evidence="4" ref="2">
    <original>T</original>
    <variation>M</variation>
    <location>
        <position position="600"/>
    </location>
</feature>
<feature type="helix" evidence="6">
    <location>
        <begin position="3"/>
        <end position="13"/>
    </location>
</feature>
<feature type="helix" evidence="6">
    <location>
        <begin position="14"/>
        <end position="16"/>
    </location>
</feature>
<feature type="helix" evidence="6">
    <location>
        <begin position="17"/>
        <end position="21"/>
    </location>
</feature>
<feature type="helix" evidence="6">
    <location>
        <begin position="25"/>
        <end position="28"/>
    </location>
</feature>
<feature type="helix" evidence="6">
    <location>
        <begin position="32"/>
        <end position="57"/>
    </location>
</feature>
<feature type="strand" evidence="6">
    <location>
        <begin position="61"/>
        <end position="71"/>
    </location>
</feature>
<feature type="strand" evidence="6">
    <location>
        <begin position="74"/>
        <end position="81"/>
    </location>
</feature>
<feature type="helix" evidence="6">
    <location>
        <begin position="84"/>
        <end position="107"/>
    </location>
</feature>
<feature type="turn" evidence="6">
    <location>
        <begin position="108"/>
        <end position="110"/>
    </location>
</feature>
<feature type="helix" evidence="6">
    <location>
        <begin position="114"/>
        <end position="133"/>
    </location>
</feature>
<feature type="strand" evidence="6">
    <location>
        <begin position="134"/>
        <end position="136"/>
    </location>
</feature>
<feature type="helix" evidence="6">
    <location>
        <begin position="137"/>
        <end position="155"/>
    </location>
</feature>
<feature type="strand" evidence="8">
    <location>
        <begin position="158"/>
        <end position="160"/>
    </location>
</feature>
<feature type="helix" evidence="6">
    <location>
        <begin position="162"/>
        <end position="193"/>
    </location>
</feature>
<feature type="helix" evidence="6">
    <location>
        <begin position="198"/>
        <end position="204"/>
    </location>
</feature>
<feature type="helix" evidence="6">
    <location>
        <begin position="210"/>
        <end position="224"/>
    </location>
</feature>
<feature type="helix" evidence="6">
    <location>
        <begin position="227"/>
        <end position="229"/>
    </location>
</feature>
<feature type="helix" evidence="6">
    <location>
        <begin position="232"/>
        <end position="235"/>
    </location>
</feature>
<feature type="helix" evidence="6">
    <location>
        <begin position="236"/>
        <end position="238"/>
    </location>
</feature>
<feature type="helix" evidence="6">
    <location>
        <begin position="241"/>
        <end position="246"/>
    </location>
</feature>
<feature type="helix" evidence="6">
    <location>
        <begin position="247"/>
        <end position="251"/>
    </location>
</feature>
<feature type="helix" evidence="7">
    <location>
        <begin position="252"/>
        <end position="254"/>
    </location>
</feature>
<feature type="helix" evidence="6">
    <location>
        <begin position="255"/>
        <end position="262"/>
    </location>
</feature>
<feature type="helix" evidence="6">
    <location>
        <begin position="264"/>
        <end position="267"/>
    </location>
</feature>
<feature type="helix" evidence="6">
    <location>
        <begin position="271"/>
        <end position="292"/>
    </location>
</feature>
<feature type="helix" evidence="6">
    <location>
        <begin position="298"/>
        <end position="318"/>
    </location>
</feature>
<feature type="helix" evidence="6">
    <location>
        <begin position="322"/>
        <end position="349"/>
    </location>
</feature>
<feature type="turn" evidence="6">
    <location>
        <begin position="350"/>
        <end position="352"/>
    </location>
</feature>
<feature type="helix" evidence="6">
    <location>
        <begin position="356"/>
        <end position="358"/>
    </location>
</feature>
<feature type="turn" evidence="6">
    <location>
        <begin position="363"/>
        <end position="365"/>
    </location>
</feature>
<feature type="helix" evidence="6">
    <location>
        <begin position="367"/>
        <end position="380"/>
    </location>
</feature>
<feature type="strand" evidence="5">
    <location>
        <begin position="384"/>
        <end position="386"/>
    </location>
</feature>
<feature type="helix" evidence="6">
    <location>
        <begin position="389"/>
        <end position="400"/>
    </location>
</feature>
<feature type="strand" evidence="6">
    <location>
        <begin position="402"/>
        <end position="404"/>
    </location>
</feature>
<feature type="helix" evidence="6">
    <location>
        <begin position="406"/>
        <end position="431"/>
    </location>
</feature>
<feature type="strand" evidence="6">
    <location>
        <begin position="432"/>
        <end position="434"/>
    </location>
</feature>
<feature type="helix" evidence="6">
    <location>
        <begin position="448"/>
        <end position="470"/>
    </location>
</feature>
<feature type="helix" evidence="6">
    <location>
        <begin position="484"/>
        <end position="487"/>
    </location>
</feature>
<feature type="helix" evidence="6">
    <location>
        <begin position="489"/>
        <end position="506"/>
    </location>
</feature>
<feature type="helix" evidence="6">
    <location>
        <begin position="507"/>
        <end position="509"/>
    </location>
</feature>
<feature type="helix" evidence="6">
    <location>
        <begin position="518"/>
        <end position="524"/>
    </location>
</feature>
<feature type="helix" evidence="6">
    <location>
        <begin position="526"/>
        <end position="528"/>
    </location>
</feature>
<feature type="helix" evidence="6">
    <location>
        <begin position="529"/>
        <end position="533"/>
    </location>
</feature>
<feature type="helix" evidence="6">
    <location>
        <begin position="536"/>
        <end position="547"/>
    </location>
</feature>
<feature type="helix" evidence="6">
    <location>
        <begin position="548"/>
        <end position="556"/>
    </location>
</feature>
<feature type="helix" evidence="6">
    <location>
        <begin position="557"/>
        <end position="561"/>
    </location>
</feature>
<feature type="helix" evidence="6">
    <location>
        <begin position="563"/>
        <end position="578"/>
    </location>
</feature>
<feature type="helix" evidence="6">
    <location>
        <begin position="584"/>
        <end position="601"/>
    </location>
</feature>
<feature type="turn" evidence="6">
    <location>
        <begin position="602"/>
        <end position="604"/>
    </location>
</feature>
<reference key="1">
    <citation type="journal article" date="1999" name="Gene">
        <title>Complete nucleotide sequence of pig (Sus scrofa) mitochondrial genome and dating evolutionary divergence within artiodactyla.</title>
        <authorList>
            <person name="Lin C.S."/>
            <person name="Sun Y.L."/>
            <person name="Liu C.Y."/>
            <person name="Yang P.C."/>
            <person name="Chang L.C."/>
            <person name="Cheng I.C."/>
            <person name="Mao S.J.T."/>
            <person name="Huang M.C."/>
        </authorList>
    </citation>
    <scope>NUCLEOTIDE SEQUENCE [LARGE SCALE GENOMIC DNA]</scope>
    <source>
        <strain>Landrace</strain>
    </source>
</reference>
<reference key="2">
    <citation type="journal article" date="2001" name="J. Mol. Evol.">
        <title>A phylogenetic study of the origin of the domestic pig estimated from the near-complete mtDNA genome.</title>
        <authorList>
            <person name="Kijas J.M.H."/>
            <person name="Andersson L."/>
        </authorList>
    </citation>
    <scope>NUCLEOTIDE SEQUENCE [GENOMIC DNA]</scope>
    <source>
        <strain>Meishan</strain>
    </source>
</reference>
<evidence type="ECO:0000250" key="1">
    <source>
        <dbReference type="UniProtKB" id="P03915"/>
    </source>
</evidence>
<evidence type="ECO:0000250" key="2">
    <source>
        <dbReference type="UniProtKB" id="P03920"/>
    </source>
</evidence>
<evidence type="ECO:0000255" key="3"/>
<evidence type="ECO:0000305" key="4"/>
<evidence type="ECO:0007829" key="5">
    <source>
        <dbReference type="PDB" id="7V2D"/>
    </source>
</evidence>
<evidence type="ECO:0007829" key="6">
    <source>
        <dbReference type="PDB" id="7V2H"/>
    </source>
</evidence>
<evidence type="ECO:0007829" key="7">
    <source>
        <dbReference type="PDB" id="7V2R"/>
    </source>
</evidence>
<evidence type="ECO:0007829" key="8">
    <source>
        <dbReference type="PDB" id="7V32"/>
    </source>
</evidence>